<gene>
    <name evidence="8" type="primary">sun-1</name>
    <name evidence="8" type="synonym">mtf-1</name>
    <name evidence="8" type="ORF">F57B1.2</name>
</gene>
<keyword id="KW-0175">Coiled coil</keyword>
<keyword id="KW-0472">Membrane</keyword>
<keyword id="KW-0539">Nucleus</keyword>
<keyword id="KW-1185">Reference proteome</keyword>
<keyword id="KW-0812">Transmembrane</keyword>
<keyword id="KW-1133">Transmembrane helix</keyword>
<sequence>MALRHTISPQFSNRHSPPVTRSVSRTGVHQPLDTSTPVTRRDSQPGTITGTIQRFHESADDSEIDLNSSKFIYKEHFSYKEITSMKKEMWYDWLEYRIRMVRRRFVPTWAQFKRTLMAVVLFAMLYKYARDCLFDGTHHNSEGSYADKDANWASEKQKFHQTISNLRAEFSAHDKQLDFKTDHLEKLLENVLEHSKGWKESAIEELKQIKLWQAEISDALQQMKKEIDDAKSTKIIHSTPEKAPETAPTASLPPSSQLQPMHITRRALLGVNVANSLIGASIDHSCSSRPVSAKDGFFYDFMSYFGTFQEGYALLDRDVLSPGEAWCTYDKRATLTVKLARFVIPKSVSYQHVRWSGIVPNHAPKLYDVVACTDSCCTKWQPLVANCEYKERDGSYDEQEQFCSVPTIQNHSPINHVQFRFRENHGDMPKTCAYLIRVYGEPVDPPKETQPMTDNGTESKLESAIVNSVSETA</sequence>
<comment type="function">
    <text evidence="5 6">Involved in centrosome attachment to the nucleus. Required for zyg-12 localization to the nuclear envelope. Together with pot-1, it is required to anchor telomeres to the nuclear envelope in embryos (PubMed:24297748).</text>
</comment>
<comment type="interaction">
    <interactant intactId="EBI-15599048">
        <id>Q20924</id>
    </interactant>
    <interactant intactId="EBI-494118">
        <id>P30429</id>
        <label>ced-4</label>
    </interactant>
    <organismsDiffer>false</organismsDiffer>
    <experiments>3</experiments>
</comment>
<comment type="subcellular location">
    <subcellularLocation>
        <location evidence="7">Nucleus membrane</location>
        <topology evidence="7">Single-pass membrane protein</topology>
    </subcellularLocation>
    <subcellularLocation>
        <location evidence="6">Nucleus envelope</location>
    </subcellularLocation>
</comment>
<comment type="domain">
    <text evidence="1">The SUN domain may play a role in nuclear anchoring.</text>
</comment>
<comment type="disruption phenotype">
    <text evidence="6">RNAi-mediated knockdown disrupts both the localization of pot-1 and the anchoring of telomeres to the nuclear envelope in early embryos.</text>
</comment>
<accession>Q20924</accession>
<evidence type="ECO:0000250" key="1"/>
<evidence type="ECO:0000255" key="2"/>
<evidence type="ECO:0000255" key="3">
    <source>
        <dbReference type="PROSITE-ProRule" id="PRU00802"/>
    </source>
</evidence>
<evidence type="ECO:0000256" key="4">
    <source>
        <dbReference type="SAM" id="MobiDB-lite"/>
    </source>
</evidence>
<evidence type="ECO:0000269" key="5">
    <source>
    </source>
</evidence>
<evidence type="ECO:0000269" key="6">
    <source>
    </source>
</evidence>
<evidence type="ECO:0000305" key="7">
    <source>
    </source>
</evidence>
<evidence type="ECO:0000312" key="8">
    <source>
        <dbReference type="WormBase" id="F57B1.2"/>
    </source>
</evidence>
<reference key="1">
    <citation type="journal article" date="1998" name="Science">
        <title>Genome sequence of the nematode C. elegans: a platform for investigating biology.</title>
        <authorList>
            <consortium name="The C. elegans sequencing consortium"/>
        </authorList>
    </citation>
    <scope>NUCLEOTIDE SEQUENCE [LARGE SCALE GENOMIC DNA]</scope>
    <source>
        <strain>Bristol N2</strain>
    </source>
</reference>
<reference key="2">
    <citation type="journal article" date="2003" name="Cell">
        <title>The C. elegans hook protein, ZYG-12, mediates the essential attachment between the centrosome and nucleus.</title>
        <authorList>
            <person name="Malone C.J."/>
            <person name="Misner L."/>
            <person name="Le Bot N."/>
            <person name="Tsai M.-C."/>
            <person name="Campbell J.M."/>
            <person name="Ahringer J."/>
            <person name="White J.G."/>
        </authorList>
    </citation>
    <scope>FUNCTION</scope>
    <scope>SUBCELLULAR LOCATION</scope>
</reference>
<reference key="3">
    <citation type="journal article" date="2013" name="J. Cell Biol.">
        <title>The shelterin protein POT-1 anchors Caenorhabditis elegans telomeres through SUN-1 at the nuclear periphery.</title>
        <authorList>
            <person name="Ferreira H.C."/>
            <person name="Towbin B.D."/>
            <person name="Jegou T."/>
            <person name="Gasser S.M."/>
        </authorList>
    </citation>
    <scope>FUNCTION</scope>
    <scope>SUBCELLULAR LOCATION</scope>
    <scope>DISRUPTION PHENOTYPE</scope>
</reference>
<protein>
    <recommendedName>
        <fullName>Sun domain-containing protein 1</fullName>
    </recommendedName>
</protein>
<proteinExistence type="evidence at protein level"/>
<name>SUN1_CAEEL</name>
<dbReference type="EMBL" id="BX284605">
    <property type="protein sequence ID" value="CAB01511.1"/>
    <property type="molecule type" value="Genomic_DNA"/>
</dbReference>
<dbReference type="PIR" id="T22830">
    <property type="entry name" value="T22830"/>
</dbReference>
<dbReference type="RefSeq" id="NP_506281.1">
    <property type="nucleotide sequence ID" value="NM_073880.6"/>
</dbReference>
<dbReference type="SMR" id="Q20924"/>
<dbReference type="BioGRID" id="44820">
    <property type="interactions" value="11"/>
</dbReference>
<dbReference type="DIP" id="DIP-52612N"/>
<dbReference type="FunCoup" id="Q20924">
    <property type="interactions" value="12"/>
</dbReference>
<dbReference type="IntAct" id="Q20924">
    <property type="interactions" value="2"/>
</dbReference>
<dbReference type="STRING" id="6239.F57B1.2.1"/>
<dbReference type="iPTMnet" id="Q20924"/>
<dbReference type="PaxDb" id="6239-F57B1.2"/>
<dbReference type="PeptideAtlas" id="Q20924"/>
<dbReference type="EnsemblMetazoa" id="F57B1.2.1">
    <property type="protein sequence ID" value="F57B1.2.1"/>
    <property type="gene ID" value="WBGene00006311"/>
</dbReference>
<dbReference type="GeneID" id="179802"/>
<dbReference type="KEGG" id="cel:CELE_F57B1.2"/>
<dbReference type="UCSC" id="F57B1.2">
    <property type="organism name" value="c. elegans"/>
</dbReference>
<dbReference type="AGR" id="WB:WBGene00006311"/>
<dbReference type="CTD" id="179802"/>
<dbReference type="WormBase" id="F57B1.2">
    <property type="protein sequence ID" value="CE11288"/>
    <property type="gene ID" value="WBGene00006311"/>
    <property type="gene designation" value="sun-1"/>
</dbReference>
<dbReference type="eggNOG" id="KOG2687">
    <property type="taxonomic scope" value="Eukaryota"/>
</dbReference>
<dbReference type="HOGENOM" id="CLU_029733_1_0_1"/>
<dbReference type="InParanoid" id="Q20924"/>
<dbReference type="OMA" id="VPNHAPK"/>
<dbReference type="OrthoDB" id="342281at2759"/>
<dbReference type="PRO" id="PR:Q20924"/>
<dbReference type="Proteomes" id="UP000001940">
    <property type="component" value="Chromosome V"/>
</dbReference>
<dbReference type="Bgee" id="WBGene00006311">
    <property type="expression patterns" value="Expressed in germ line (C elegans) and 3 other cell types or tissues"/>
</dbReference>
<dbReference type="GO" id="GO:0034993">
    <property type="term" value="C:meiotic nuclear membrane microtubule tethering complex"/>
    <property type="evidence" value="ECO:0000318"/>
    <property type="project" value="GO_Central"/>
</dbReference>
<dbReference type="GO" id="GO:0005635">
    <property type="term" value="C:nuclear envelope"/>
    <property type="evidence" value="ECO:0000314"/>
    <property type="project" value="WormBase"/>
</dbReference>
<dbReference type="GO" id="GO:0031965">
    <property type="term" value="C:nuclear membrane"/>
    <property type="evidence" value="ECO:0007669"/>
    <property type="project" value="UniProtKB-SubCell"/>
</dbReference>
<dbReference type="GO" id="GO:0043495">
    <property type="term" value="F:protein-membrane adaptor activity"/>
    <property type="evidence" value="ECO:0000318"/>
    <property type="project" value="GO_Central"/>
</dbReference>
<dbReference type="GO" id="GO:0051642">
    <property type="term" value="P:centrosome localization"/>
    <property type="evidence" value="ECO:0000315"/>
    <property type="project" value="WormBase"/>
</dbReference>
<dbReference type="GO" id="GO:0009792">
    <property type="term" value="P:embryo development ending in birth or egg hatching"/>
    <property type="evidence" value="ECO:0000315"/>
    <property type="project" value="WormBase"/>
</dbReference>
<dbReference type="GO" id="GO:0008104">
    <property type="term" value="P:protein localization"/>
    <property type="evidence" value="ECO:0000315"/>
    <property type="project" value="WormBase"/>
</dbReference>
<dbReference type="GO" id="GO:0010824">
    <property type="term" value="P:regulation of centrosome duplication"/>
    <property type="evidence" value="ECO:0000316"/>
    <property type="project" value="WormBase"/>
</dbReference>
<dbReference type="FunFam" id="2.60.120.260:FF:000158">
    <property type="entry name" value="Protein CBG16940"/>
    <property type="match status" value="1"/>
</dbReference>
<dbReference type="Gene3D" id="2.60.120.260">
    <property type="entry name" value="Galactose-binding domain-like"/>
    <property type="match status" value="1"/>
</dbReference>
<dbReference type="InterPro" id="IPR045119">
    <property type="entry name" value="SUN1-5"/>
</dbReference>
<dbReference type="InterPro" id="IPR012919">
    <property type="entry name" value="SUN_dom"/>
</dbReference>
<dbReference type="PANTHER" id="PTHR12911">
    <property type="entry name" value="SAD1/UNC-84-LIKE PROTEIN-RELATED"/>
    <property type="match status" value="1"/>
</dbReference>
<dbReference type="PANTHER" id="PTHR12911:SF2">
    <property type="entry name" value="SUN DOMAIN-CONTAINING PROTEIN 1"/>
    <property type="match status" value="1"/>
</dbReference>
<dbReference type="Pfam" id="PF07738">
    <property type="entry name" value="Sad1_UNC"/>
    <property type="match status" value="1"/>
</dbReference>
<dbReference type="PROSITE" id="PS51469">
    <property type="entry name" value="SUN"/>
    <property type="match status" value="1"/>
</dbReference>
<organism>
    <name type="scientific">Caenorhabditis elegans</name>
    <dbReference type="NCBI Taxonomy" id="6239"/>
    <lineage>
        <taxon>Eukaryota</taxon>
        <taxon>Metazoa</taxon>
        <taxon>Ecdysozoa</taxon>
        <taxon>Nematoda</taxon>
        <taxon>Chromadorea</taxon>
        <taxon>Rhabditida</taxon>
        <taxon>Rhabditina</taxon>
        <taxon>Rhabditomorpha</taxon>
        <taxon>Rhabditoidea</taxon>
        <taxon>Rhabditidae</taxon>
        <taxon>Peloderinae</taxon>
        <taxon>Caenorhabditis</taxon>
    </lineage>
</organism>
<feature type="chain" id="PRO_0000218921" description="Sun domain-containing protein 1">
    <location>
        <begin position="1"/>
        <end position="473"/>
    </location>
</feature>
<feature type="transmembrane region" description="Helical" evidence="2">
    <location>
        <begin position="262"/>
        <end position="282"/>
    </location>
</feature>
<feature type="domain" description="SUN" evidence="3">
    <location>
        <begin position="279"/>
        <end position="443"/>
    </location>
</feature>
<feature type="region of interest" description="Disordered" evidence="4">
    <location>
        <begin position="1"/>
        <end position="47"/>
    </location>
</feature>
<feature type="region of interest" description="Disordered" evidence="4">
    <location>
        <begin position="237"/>
        <end position="257"/>
    </location>
</feature>
<feature type="region of interest" description="Disordered" evidence="4">
    <location>
        <begin position="443"/>
        <end position="473"/>
    </location>
</feature>
<feature type="coiled-coil region" evidence="2">
    <location>
        <begin position="163"/>
        <end position="191"/>
    </location>
</feature>
<feature type="coiled-coil region" evidence="2">
    <location>
        <begin position="204"/>
        <end position="235"/>
    </location>
</feature>
<feature type="compositionally biased region" description="Polar residues" evidence="4">
    <location>
        <begin position="7"/>
        <end position="47"/>
    </location>
</feature>
<feature type="compositionally biased region" description="Polar residues" evidence="4">
    <location>
        <begin position="248"/>
        <end position="257"/>
    </location>
</feature>